<organism>
    <name type="scientific">Mycobacterium tuberculosis (strain CDC 1551 / Oshkosh)</name>
    <dbReference type="NCBI Taxonomy" id="83331"/>
    <lineage>
        <taxon>Bacteria</taxon>
        <taxon>Bacillati</taxon>
        <taxon>Actinomycetota</taxon>
        <taxon>Actinomycetes</taxon>
        <taxon>Mycobacteriales</taxon>
        <taxon>Mycobacteriaceae</taxon>
        <taxon>Mycobacterium</taxon>
        <taxon>Mycobacterium tuberculosis complex</taxon>
    </lineage>
</organism>
<name>VPB28_MYCTO</name>
<dbReference type="EMBL" id="AE000516">
    <property type="protein sequence ID" value="AAK44859.1"/>
    <property type="molecule type" value="Genomic_DNA"/>
</dbReference>
<dbReference type="PIR" id="C70910">
    <property type="entry name" value="C70910"/>
</dbReference>
<dbReference type="RefSeq" id="WP_003403184.1">
    <property type="nucleotide sequence ID" value="NZ_KK341227.1"/>
</dbReference>
<dbReference type="SMR" id="P9WJ38"/>
<dbReference type="KEGG" id="mtc:MT0637"/>
<dbReference type="PATRIC" id="fig|83331.31.peg.672"/>
<dbReference type="HOGENOM" id="CLU_165457_1_0_11"/>
<dbReference type="Proteomes" id="UP000001020">
    <property type="component" value="Chromosome"/>
</dbReference>
<dbReference type="InterPro" id="IPR011660">
    <property type="entry name" value="VapB-like"/>
</dbReference>
<dbReference type="Pfam" id="PF07704">
    <property type="entry name" value="PSK_trans_fac"/>
    <property type="match status" value="1"/>
</dbReference>
<reference key="1">
    <citation type="journal article" date="2002" name="J. Bacteriol.">
        <title>Whole-genome comparison of Mycobacterium tuberculosis clinical and laboratory strains.</title>
        <authorList>
            <person name="Fleischmann R.D."/>
            <person name="Alland D."/>
            <person name="Eisen J.A."/>
            <person name="Carpenter L."/>
            <person name="White O."/>
            <person name="Peterson J.D."/>
            <person name="DeBoy R.T."/>
            <person name="Dodson R.J."/>
            <person name="Gwinn M.L."/>
            <person name="Haft D.H."/>
            <person name="Hickey E.K."/>
            <person name="Kolonay J.F."/>
            <person name="Nelson W.C."/>
            <person name="Umayam L.A."/>
            <person name="Ermolaeva M.D."/>
            <person name="Salzberg S.L."/>
            <person name="Delcher A."/>
            <person name="Utterback T.R."/>
            <person name="Weidman J.F."/>
            <person name="Khouri H.M."/>
            <person name="Gill J."/>
            <person name="Mikula A."/>
            <person name="Bishai W."/>
            <person name="Jacobs W.R. Jr."/>
            <person name="Venter J.C."/>
            <person name="Fraser C.M."/>
        </authorList>
    </citation>
    <scope>NUCLEOTIDE SEQUENCE [LARGE SCALE GENOMIC DNA]</scope>
    <source>
        <strain>CDC 1551 / Oshkosh</strain>
    </source>
</reference>
<sequence length="81" mass="8813">MALNIKDPSVHQAVKQIAKITGESQARAVATAVNERLARLRSDDLAARLLAIGHKTASRMSPEAKRLDHDALLYDERGLPA</sequence>
<comment type="function">
    <text evidence="1">Antitoxin component of a type II toxin-antitoxin (TA) system.</text>
</comment>
<accession>P9WJ38</accession>
<accession>L0T763</accession>
<accession>O07770</accession>
<accession>Q7D9J7</accession>
<evidence type="ECO:0000250" key="1"/>
<proteinExistence type="inferred from homology"/>
<keyword id="KW-1185">Reference proteome</keyword>
<keyword id="KW-1277">Toxin-antitoxin system</keyword>
<gene>
    <name type="primary">vapB28</name>
    <name type="ordered locus">MT0637</name>
</gene>
<feature type="chain" id="PRO_0000427897" description="Antitoxin VapB28">
    <location>
        <begin position="1"/>
        <end position="81"/>
    </location>
</feature>
<protein>
    <recommendedName>
        <fullName>Antitoxin VapB28</fullName>
    </recommendedName>
</protein>